<dbReference type="EC" id="2.3.1.74"/>
<dbReference type="EMBL" id="L03352">
    <property type="protein sequence ID" value="AAA33951.1"/>
    <property type="molecule type" value="Genomic_DNA"/>
</dbReference>
<dbReference type="PIR" id="JQ2259">
    <property type="entry name" value="JQ2259"/>
</dbReference>
<dbReference type="RefSeq" id="XP_003533807.1">
    <property type="nucleotide sequence ID" value="XM_003533759.5"/>
</dbReference>
<dbReference type="SMR" id="P30080"/>
<dbReference type="STRING" id="3847.P30080"/>
<dbReference type="PaxDb" id="3847-GLYMA09G08780.1"/>
<dbReference type="EnsemblPlants" id="KRH37579">
    <property type="protein sequence ID" value="KRH37579"/>
    <property type="gene ID" value="GLYMA_09G075200"/>
</dbReference>
<dbReference type="GeneID" id="100809433"/>
<dbReference type="Gramene" id="KRH37579">
    <property type="protein sequence ID" value="KRH37579"/>
    <property type="gene ID" value="GLYMA_09G075200"/>
</dbReference>
<dbReference type="KEGG" id="gmx:100809433"/>
<dbReference type="eggNOG" id="ENOG502QRSY">
    <property type="taxonomic scope" value="Eukaryota"/>
</dbReference>
<dbReference type="HOGENOM" id="CLU_034992_2_0_1"/>
<dbReference type="InParanoid" id="P30080"/>
<dbReference type="OrthoDB" id="1854138at2759"/>
<dbReference type="BRENDA" id="2.3.1.74">
    <property type="organism ID" value="2483"/>
</dbReference>
<dbReference type="UniPathway" id="UPA00154"/>
<dbReference type="Proteomes" id="UP000008827">
    <property type="component" value="Chromosome 9"/>
</dbReference>
<dbReference type="GO" id="GO:0016747">
    <property type="term" value="F:acyltransferase activity, transferring groups other than amino-acyl groups"/>
    <property type="evidence" value="ECO:0000318"/>
    <property type="project" value="GO_Central"/>
</dbReference>
<dbReference type="GO" id="GO:0016210">
    <property type="term" value="F:naringenin-chalcone synthase activity"/>
    <property type="evidence" value="ECO:0007669"/>
    <property type="project" value="UniProtKB-EC"/>
</dbReference>
<dbReference type="GO" id="GO:0009813">
    <property type="term" value="P:flavonoid biosynthetic process"/>
    <property type="evidence" value="ECO:0007669"/>
    <property type="project" value="UniProtKB-UniPathway"/>
</dbReference>
<dbReference type="GO" id="GO:0030639">
    <property type="term" value="P:polyketide biosynthetic process"/>
    <property type="evidence" value="ECO:0000318"/>
    <property type="project" value="GO_Central"/>
</dbReference>
<dbReference type="CDD" id="cd00831">
    <property type="entry name" value="CHS_like"/>
    <property type="match status" value="1"/>
</dbReference>
<dbReference type="FunFam" id="3.40.47.10:FF:000014">
    <property type="entry name" value="Chalcone synthase 1"/>
    <property type="match status" value="1"/>
</dbReference>
<dbReference type="FunFam" id="3.40.47.10:FF:000025">
    <property type="entry name" value="Chalcone synthase 2"/>
    <property type="match status" value="1"/>
</dbReference>
<dbReference type="Gene3D" id="3.40.47.10">
    <property type="match status" value="2"/>
</dbReference>
<dbReference type="InterPro" id="IPR012328">
    <property type="entry name" value="Chalcone/stilbene_synt_C"/>
</dbReference>
<dbReference type="InterPro" id="IPR001099">
    <property type="entry name" value="Chalcone/stilbene_synt_N"/>
</dbReference>
<dbReference type="InterPro" id="IPR018088">
    <property type="entry name" value="Chalcone/stilbene_synthase_AS"/>
</dbReference>
<dbReference type="InterPro" id="IPR011141">
    <property type="entry name" value="Polyketide_synthase_type-III"/>
</dbReference>
<dbReference type="InterPro" id="IPR016039">
    <property type="entry name" value="Thiolase-like"/>
</dbReference>
<dbReference type="PANTHER" id="PTHR11877:SF100">
    <property type="entry name" value="CHALCONE SYNTHASE 3"/>
    <property type="match status" value="1"/>
</dbReference>
<dbReference type="PANTHER" id="PTHR11877">
    <property type="entry name" value="HYDROXYMETHYLGLUTARYL-COA SYNTHASE"/>
    <property type="match status" value="1"/>
</dbReference>
<dbReference type="Pfam" id="PF02797">
    <property type="entry name" value="Chal_sti_synt_C"/>
    <property type="match status" value="1"/>
</dbReference>
<dbReference type="Pfam" id="PF00195">
    <property type="entry name" value="Chal_sti_synt_N"/>
    <property type="match status" value="1"/>
</dbReference>
<dbReference type="PIRSF" id="PIRSF000451">
    <property type="entry name" value="PKS_III"/>
    <property type="match status" value="1"/>
</dbReference>
<dbReference type="SUPFAM" id="SSF53901">
    <property type="entry name" value="Thiolase-like"/>
    <property type="match status" value="2"/>
</dbReference>
<dbReference type="PROSITE" id="PS00441">
    <property type="entry name" value="CHALCONE_SYNTH"/>
    <property type="match status" value="1"/>
</dbReference>
<protein>
    <recommendedName>
        <fullName>Chalcone synthase 6</fullName>
        <ecNumber>2.3.1.74</ecNumber>
    </recommendedName>
    <alternativeName>
        <fullName>Naringenin-chalcone synthase 6</fullName>
    </alternativeName>
</protein>
<proteinExistence type="inferred from homology"/>
<sequence length="388" mass="42532">MVSVEEIRKAQRAEGPATVMAIGTATPPNCVDQSTYPDYYFRITNSDHMNELKEKFKRMCDKSMIKKRYMYLNEEILKENPSVCAYMEPSLDARQDMVVVEVPKLGKEAATKAIKEWGQPKSKITHLIFCTTSGVDMPGADYQLTKLLGLRPSVKRYMMYQQGCFAGGTVLRLAKDLAENNTGARVLVVCSEITAVTFRGPSDTHLDSLVGQALFGDGAAAVIVGSDPLPAEKPLFELVWTAQTILPDSEGAIDGHLREVGLTFHLLKDVPGLISKNIQKALVEAFQPLGIDDYNSIFWIAHPGGPAILDQVEAKLGLKPEKMEATRHVLSEYGNMSSACVLFILDQMRKKSIENGLGTTGEGLEWGVLFGFGPGLTVETVVLRSVTV</sequence>
<reference key="1">
    <citation type="journal article" date="1993" name="Plant Physiol.">
        <title>Nucleotide sequence of a soybean chalcone synthase gene with a possible role in ultraviolet-B sensitivity, Gmchs6.</title>
        <authorList>
            <person name="Akada S."/>
            <person name="Kung S.D."/>
            <person name="Dube S.K."/>
        </authorList>
    </citation>
    <scope>NUCLEOTIDE SEQUENCE [GENOMIC DNA]</scope>
    <source>
        <strain>cv. Williams</strain>
    </source>
</reference>
<gene>
    <name type="primary">CHS6</name>
</gene>
<accession>P30080</accession>
<name>CHS6_SOYBN</name>
<organism>
    <name type="scientific">Glycine max</name>
    <name type="common">Soybean</name>
    <name type="synonym">Glycine hispida</name>
    <dbReference type="NCBI Taxonomy" id="3847"/>
    <lineage>
        <taxon>Eukaryota</taxon>
        <taxon>Viridiplantae</taxon>
        <taxon>Streptophyta</taxon>
        <taxon>Embryophyta</taxon>
        <taxon>Tracheophyta</taxon>
        <taxon>Spermatophyta</taxon>
        <taxon>Magnoliopsida</taxon>
        <taxon>eudicotyledons</taxon>
        <taxon>Gunneridae</taxon>
        <taxon>Pentapetalae</taxon>
        <taxon>rosids</taxon>
        <taxon>fabids</taxon>
        <taxon>Fabales</taxon>
        <taxon>Fabaceae</taxon>
        <taxon>Papilionoideae</taxon>
        <taxon>50 kb inversion clade</taxon>
        <taxon>NPAAA clade</taxon>
        <taxon>indigoferoid/millettioid clade</taxon>
        <taxon>Phaseoleae</taxon>
        <taxon>Glycine</taxon>
        <taxon>Glycine subgen. Soja</taxon>
    </lineage>
</organism>
<comment type="function">
    <text>The primary product of this enzyme is 4,2',4',6'-tetrahydroxychalcone (also termed naringenin-chalcone or chalcone) which can under specific conditions spontaneously isomerize into naringenin.</text>
</comment>
<comment type="catalytic activity">
    <reaction evidence="1">
        <text>(E)-4-coumaroyl-CoA + 3 malonyl-CoA + 3 H(+) = 2',4,4',6'-tetrahydroxychalcone + 3 CO2 + 4 CoA</text>
        <dbReference type="Rhea" id="RHEA:11128"/>
        <dbReference type="ChEBI" id="CHEBI:15378"/>
        <dbReference type="ChEBI" id="CHEBI:15413"/>
        <dbReference type="ChEBI" id="CHEBI:16526"/>
        <dbReference type="ChEBI" id="CHEBI:57287"/>
        <dbReference type="ChEBI" id="CHEBI:57384"/>
        <dbReference type="ChEBI" id="CHEBI:85008"/>
        <dbReference type="EC" id="2.3.1.74"/>
    </reaction>
</comment>
<comment type="pathway">
    <text>Secondary metabolite biosynthesis; flavonoid biosynthesis.</text>
</comment>
<comment type="similarity">
    <text evidence="2">Belongs to the thiolase-like superfamily. Chalcone/stilbene synthases family.</text>
</comment>
<evidence type="ECO:0000255" key="1">
    <source>
        <dbReference type="PROSITE-ProRule" id="PRU10023"/>
    </source>
</evidence>
<evidence type="ECO:0000305" key="2"/>
<keyword id="KW-0012">Acyltransferase</keyword>
<keyword id="KW-0284">Flavonoid biosynthesis</keyword>
<keyword id="KW-1185">Reference proteome</keyword>
<keyword id="KW-0808">Transferase</keyword>
<feature type="chain" id="PRO_0000216066" description="Chalcone synthase 6">
    <location>
        <begin position="1"/>
        <end position="388"/>
    </location>
</feature>
<feature type="active site" evidence="1">
    <location>
        <position position="164"/>
    </location>
</feature>